<proteinExistence type="evidence at protein level"/>
<accession>Q9ST69</accession>
<accession>A0A0K9QCC0</accession>
<accession>P82131</accession>
<dbReference type="EMBL" id="X93159">
    <property type="protein sequence ID" value="CAA63650.1"/>
    <property type="molecule type" value="mRNA"/>
</dbReference>
<dbReference type="EMBL" id="KQ197116">
    <property type="protein sequence ID" value="KNA04905.1"/>
    <property type="molecule type" value="Genomic_DNA"/>
</dbReference>
<dbReference type="PDB" id="4V61">
    <property type="method" value="EM"/>
    <property type="resolution" value="9.40 A"/>
    <property type="chains" value="AE=1-308"/>
</dbReference>
<dbReference type="PDB" id="5MMJ">
    <property type="method" value="EM"/>
    <property type="resolution" value="3.65 A"/>
    <property type="chains" value="e=1-308"/>
</dbReference>
<dbReference type="PDB" id="5MMM">
    <property type="method" value="EM"/>
    <property type="resolution" value="3.40 A"/>
    <property type="chains" value="e=1-308"/>
</dbReference>
<dbReference type="PDB" id="5X8P">
    <property type="method" value="EM"/>
    <property type="resolution" value="3.40 A"/>
    <property type="chains" value="e=56-308"/>
</dbReference>
<dbReference type="PDB" id="5X8R">
    <property type="method" value="EM"/>
    <property type="resolution" value="3.70 A"/>
    <property type="chains" value="e=56-308"/>
</dbReference>
<dbReference type="PDB" id="6ERI">
    <property type="method" value="EM"/>
    <property type="resolution" value="3.00 A"/>
    <property type="chains" value="BE=151-308"/>
</dbReference>
<dbReference type="PDBsum" id="4V61"/>
<dbReference type="PDBsum" id="5MMJ"/>
<dbReference type="PDBsum" id="5MMM"/>
<dbReference type="PDBsum" id="5X8P"/>
<dbReference type="PDBsum" id="5X8R"/>
<dbReference type="PDBsum" id="6ERI"/>
<dbReference type="EMDB" id="EMD-3532"/>
<dbReference type="EMDB" id="EMD-3533"/>
<dbReference type="EMDB" id="EMD-3941"/>
<dbReference type="EMDB" id="EMD-6709"/>
<dbReference type="EMDB" id="EMD-6710"/>
<dbReference type="SMR" id="Q9ST69"/>
<dbReference type="STRING" id="3562.Q9ST69"/>
<dbReference type="OrthoDB" id="309483at2759"/>
<dbReference type="Proteomes" id="UP001155700">
    <property type="component" value="Unplaced"/>
</dbReference>
<dbReference type="GO" id="GO:0009507">
    <property type="term" value="C:chloroplast"/>
    <property type="evidence" value="ECO:0007669"/>
    <property type="project" value="UniProtKB-SubCell"/>
</dbReference>
<dbReference type="GO" id="GO:0005763">
    <property type="term" value="C:mitochondrial small ribosomal subunit"/>
    <property type="evidence" value="ECO:0000318"/>
    <property type="project" value="GO_Central"/>
</dbReference>
<dbReference type="GO" id="GO:0003729">
    <property type="term" value="F:mRNA binding"/>
    <property type="evidence" value="ECO:0007669"/>
    <property type="project" value="UniProtKB-ARBA"/>
</dbReference>
<dbReference type="GO" id="GO:0019843">
    <property type="term" value="F:rRNA binding"/>
    <property type="evidence" value="ECO:0007669"/>
    <property type="project" value="UniProtKB-KW"/>
</dbReference>
<dbReference type="GO" id="GO:0003735">
    <property type="term" value="F:structural constituent of ribosome"/>
    <property type="evidence" value="ECO:0000318"/>
    <property type="project" value="GO_Central"/>
</dbReference>
<dbReference type="GO" id="GO:0046677">
    <property type="term" value="P:response to antibiotic"/>
    <property type="evidence" value="ECO:0007669"/>
    <property type="project" value="UniProtKB-KW"/>
</dbReference>
<dbReference type="GO" id="GO:0006412">
    <property type="term" value="P:translation"/>
    <property type="evidence" value="ECO:0000318"/>
    <property type="project" value="GO_Central"/>
</dbReference>
<dbReference type="FunFam" id="3.30.160.20:FF:000001">
    <property type="entry name" value="30S ribosomal protein S5"/>
    <property type="match status" value="1"/>
</dbReference>
<dbReference type="FunFam" id="3.30.230.10:FF:000002">
    <property type="entry name" value="30S ribosomal protein S5"/>
    <property type="match status" value="1"/>
</dbReference>
<dbReference type="Gene3D" id="3.30.160.20">
    <property type="match status" value="1"/>
</dbReference>
<dbReference type="Gene3D" id="3.30.230.10">
    <property type="match status" value="1"/>
</dbReference>
<dbReference type="HAMAP" id="MF_01307_B">
    <property type="entry name" value="Ribosomal_uS5_B"/>
    <property type="match status" value="1"/>
</dbReference>
<dbReference type="InterPro" id="IPR020568">
    <property type="entry name" value="Ribosomal_Su5_D2-typ_SF"/>
</dbReference>
<dbReference type="InterPro" id="IPR000851">
    <property type="entry name" value="Ribosomal_uS5"/>
</dbReference>
<dbReference type="InterPro" id="IPR005712">
    <property type="entry name" value="Ribosomal_uS5_bac-type"/>
</dbReference>
<dbReference type="InterPro" id="IPR005324">
    <property type="entry name" value="Ribosomal_uS5_C"/>
</dbReference>
<dbReference type="InterPro" id="IPR013810">
    <property type="entry name" value="Ribosomal_uS5_N"/>
</dbReference>
<dbReference type="InterPro" id="IPR018192">
    <property type="entry name" value="Ribosomal_uS5_N_CS"/>
</dbReference>
<dbReference type="InterPro" id="IPR014721">
    <property type="entry name" value="Ribsml_uS5_D2-typ_fold_subgr"/>
</dbReference>
<dbReference type="NCBIfam" id="TIGR01021">
    <property type="entry name" value="rpsE_bact"/>
    <property type="match status" value="1"/>
</dbReference>
<dbReference type="PANTHER" id="PTHR13718">
    <property type="entry name" value="RIBOSOMAL S SUBUNIT"/>
    <property type="match status" value="1"/>
</dbReference>
<dbReference type="PANTHER" id="PTHR13718:SF61">
    <property type="entry name" value="SMALL RIBOSOMAL SUBUNIT PROTEIN US5M"/>
    <property type="match status" value="1"/>
</dbReference>
<dbReference type="Pfam" id="PF00333">
    <property type="entry name" value="Ribosomal_S5"/>
    <property type="match status" value="1"/>
</dbReference>
<dbReference type="Pfam" id="PF03719">
    <property type="entry name" value="Ribosomal_S5_C"/>
    <property type="match status" value="1"/>
</dbReference>
<dbReference type="SUPFAM" id="SSF54768">
    <property type="entry name" value="dsRNA-binding domain-like"/>
    <property type="match status" value="1"/>
</dbReference>
<dbReference type="SUPFAM" id="SSF54211">
    <property type="entry name" value="Ribosomal protein S5 domain 2-like"/>
    <property type="match status" value="1"/>
</dbReference>
<dbReference type="PROSITE" id="PS00585">
    <property type="entry name" value="RIBOSOMAL_S5"/>
    <property type="match status" value="1"/>
</dbReference>
<dbReference type="PROSITE" id="PS50881">
    <property type="entry name" value="S5_DSRBD"/>
    <property type="match status" value="1"/>
</dbReference>
<sequence length="308" mass="33581">MATTATTTPSATSLTTLHRRIPLFPTTTTLLSLSSSSKPLFLSLSSTRSFPTHLYCIKKDDIDITFFEQDNPDEEITFDPPEKPEGYIPPRAVDEPPFESEEEIALAYEELYGAAYSGESLLGNDVYAMDSKIKKATGFGSKSKKEKIRDGFEENVVQVRRVTKVVKGGKHMRFRAIVVVGDKKGQVGVGVGKAKEVVSAVQKAAVDARRNIITVPMTKYLTFPHRNEADYGAARVMLRPAAPGTGVIAGGAVRTVLEMAGVENALGKQLGSNNALNNARATIVAVQTMRQFSDVARDRGIPMEELWK</sequence>
<protein>
    <recommendedName>
        <fullName evidence="5">Small ribosomal subunit protein uS5c</fullName>
    </recommendedName>
    <alternativeName>
        <fullName evidence="4">30S ribosomal protein S5, chloroplastic</fullName>
    </alternativeName>
</protein>
<feature type="transit peptide" description="Chloroplast" evidence="1 3">
    <location>
        <begin position="1"/>
        <end position="55"/>
    </location>
</feature>
<feature type="chain" id="PRO_0000248272" description="Small ribosomal subunit protein uS5c">
    <location>
        <begin position="56"/>
        <end position="308"/>
    </location>
</feature>
<feature type="domain" description="S5 DRBM">
    <location>
        <begin position="152"/>
        <end position="215"/>
    </location>
</feature>
<feature type="sequence conflict" description="In Ref. 2; KNA04905." evidence="6" ref="2">
    <original>K</original>
    <variation>T</variation>
    <location>
        <position position="59"/>
    </location>
</feature>
<name>RR5_SPIOL</name>
<evidence type="ECO:0000269" key="1">
    <source>
    </source>
</evidence>
<evidence type="ECO:0000269" key="2">
    <source>
    </source>
</evidence>
<evidence type="ECO:0000269" key="3">
    <source ref="3"/>
</evidence>
<evidence type="ECO:0000303" key="4">
    <source>
    </source>
</evidence>
<evidence type="ECO:0000303" key="5">
    <source>
    </source>
</evidence>
<evidence type="ECO:0000305" key="6"/>
<evidence type="ECO:0000305" key="7">
    <source>
    </source>
</evidence>
<evidence type="ECO:0000305" key="8">
    <source>
    </source>
</evidence>
<reference key="1">
    <citation type="submission" date="1995-11" db="EMBL/GenBank/DDBJ databases">
        <authorList>
            <person name="Trifa Y."/>
            <person name="Diederich L."/>
            <person name="Lerbs-Mache S."/>
        </authorList>
    </citation>
    <scope>NUCLEOTIDE SEQUENCE [MRNA]</scope>
    <source>
        <strain>cv. Melody</strain>
        <tissue>Leaf</tissue>
    </source>
</reference>
<reference key="2">
    <citation type="journal article" date="2014" name="Nature">
        <title>The genome of the recently domesticated crop plant sugar beet (Beta vulgaris).</title>
        <authorList>
            <person name="Dohm J.C."/>
            <person name="Minoche A.E."/>
            <person name="Holtgraewe D."/>
            <person name="Capella-Gutierrez S."/>
            <person name="Zakrzewski F."/>
            <person name="Tafer H."/>
            <person name="Rupp O."/>
            <person name="Soerensen T.R."/>
            <person name="Stracke R."/>
            <person name="Reinhardt R."/>
            <person name="Goesmann A."/>
            <person name="Kraft T."/>
            <person name="Schulz B."/>
            <person name="Stadler P.F."/>
            <person name="Schmidt T."/>
            <person name="Gabaldon T."/>
            <person name="Lehrach H."/>
            <person name="Weisshaar B."/>
            <person name="Himmelbauer H."/>
        </authorList>
    </citation>
    <scope>NUCLEOTIDE SEQUENCE [LARGE SCALE GENOMIC DNA]</scope>
    <source>
        <strain>cv. Viroflay</strain>
        <tissue>Leaf</tissue>
    </source>
</reference>
<reference key="3">
    <citation type="submission" date="1999-10" db="UniProtKB">
        <authorList>
            <person name="Yamaguchi K."/>
            <person name="von Knoblauch K."/>
            <person name="Subramanian A.R."/>
        </authorList>
    </citation>
    <scope>PROTEIN SEQUENCE OF 56-87; 115-126; 148-160; 168-173; 184-190; 196-209; 211-218; 220-222; 227-253; 255-268 AND 300-306</scope>
</reference>
<reference key="4">
    <citation type="journal article" date="2000" name="J. Biol. Chem.">
        <title>The plastid ribosomal proteins. Identification of all the proteins in the 30S subunit of an organelle ribosome (chloroplast).</title>
        <authorList>
            <person name="Yamaguchi K."/>
            <person name="von Knoblauch K."/>
            <person name="Subramanian A.R."/>
        </authorList>
    </citation>
    <scope>PROTEIN SEQUENCE OF 56-87</scope>
    <scope>SUBUNIT</scope>
    <scope>SUBCELLULAR LOCATION</scope>
    <scope>MASS SPECTROMETRY</scope>
    <source>
        <strain>cv. Alwaro</strain>
        <tissue>Leaf</tissue>
    </source>
</reference>
<reference key="5">
    <citation type="journal article" date="2007" name="Proc. Natl. Acad. Sci. U.S.A.">
        <title>Cryo-EM study of the spinach chloroplast ribosome reveals the structural and functional roles of plastid-specific ribosomal proteins.</title>
        <authorList>
            <person name="Sharma M.R."/>
            <person name="Wilson D.N."/>
            <person name="Datta P.P."/>
            <person name="Barat C."/>
            <person name="Schluenzen F."/>
            <person name="Fucini P."/>
            <person name="Agrawal R.K."/>
        </authorList>
    </citation>
    <scope>STRUCTURE BY ELECTRON MICROSCOPY (9.4 ANGSTROMS)</scope>
</reference>
<reference key="6">
    <citation type="journal article" date="2017" name="EMBO J.">
        <title>The complete structure of the chloroplast 70S ribosome in complex with translation factor pY.</title>
        <authorList>
            <person name="Bieri P."/>
            <person name="Leibundgut M."/>
            <person name="Saurer M."/>
            <person name="Boehringer D."/>
            <person name="Ban N."/>
        </authorList>
    </citation>
    <scope>STRUCTURE BY ELECTRON MICROSCOPY (3.40 ANGSTROMS)</scope>
    <scope>SUBUNIT</scope>
    <scope>SUBCELLULAR LOCATION</scope>
</reference>
<comment type="function">
    <text evidence="7 8">Component of the chloroplast ribosome (chloro-ribosome), a dedicated translation machinery responsible for the synthesis of chloroplast genome-encoded proteins, including proteins of the transcription and translation machinery and components of the photosynthetic apparatus.</text>
</comment>
<comment type="subunit">
    <text evidence="1 2 3">Component of the chloroplast small ribosomal subunit (SSU). Mature 70S chloroplast ribosomes of higher plants consist of a small (30S) and a large (50S) subunit. The 30S small subunit contains 1 molecule of ribosomal RNA (16S rRNA) and 24 different proteins. The 50S large subunit contains 3 rRNA molecules (23S, 5S and 4.5S rRNA) and 33 different proteins (PubMed:10874039, PubMed:28007896). uS5c binds directly to 16S ribosomal RNA (Ref.3).</text>
</comment>
<comment type="subcellular location">
    <subcellularLocation>
        <location evidence="1 2">Plastid</location>
        <location evidence="1 2">Chloroplast</location>
    </subcellularLocation>
</comment>
<comment type="mass spectrometry" mass="27730.0" method="Electrospray" evidence="1"/>
<comment type="mass spectrometry" mass="27784.0" method="MALDI" evidence="1"/>
<comment type="similarity">
    <text evidence="6">Belongs to the universal ribosomal protein uS5 family.</text>
</comment>
<keyword id="KW-0002">3D-structure</keyword>
<keyword id="KW-0046">Antibiotic resistance</keyword>
<keyword id="KW-0150">Chloroplast</keyword>
<keyword id="KW-0903">Direct protein sequencing</keyword>
<keyword id="KW-0934">Plastid</keyword>
<keyword id="KW-1185">Reference proteome</keyword>
<keyword id="KW-0687">Ribonucleoprotein</keyword>
<keyword id="KW-0689">Ribosomal protein</keyword>
<keyword id="KW-0694">RNA-binding</keyword>
<keyword id="KW-0699">rRNA-binding</keyword>
<keyword id="KW-0809">Transit peptide</keyword>
<organism>
    <name type="scientific">Spinacia oleracea</name>
    <name type="common">Spinach</name>
    <dbReference type="NCBI Taxonomy" id="3562"/>
    <lineage>
        <taxon>Eukaryota</taxon>
        <taxon>Viridiplantae</taxon>
        <taxon>Streptophyta</taxon>
        <taxon>Embryophyta</taxon>
        <taxon>Tracheophyta</taxon>
        <taxon>Spermatophyta</taxon>
        <taxon>Magnoliopsida</taxon>
        <taxon>eudicotyledons</taxon>
        <taxon>Gunneridae</taxon>
        <taxon>Pentapetalae</taxon>
        <taxon>Caryophyllales</taxon>
        <taxon>Chenopodiaceae</taxon>
        <taxon>Chenopodioideae</taxon>
        <taxon>Anserineae</taxon>
        <taxon>Spinacia</taxon>
    </lineage>
</organism>
<gene>
    <name type="primary">rps5</name>
    <name type="ORF">SOVF_195380</name>
</gene>